<evidence type="ECO:0000255" key="1">
    <source>
        <dbReference type="HAMAP-Rule" id="MF_00151"/>
    </source>
</evidence>
<dbReference type="EC" id="2.7.7.3" evidence="1"/>
<dbReference type="EMBL" id="CP000090">
    <property type="protein sequence ID" value="AAZ59720.1"/>
    <property type="molecule type" value="Genomic_DNA"/>
</dbReference>
<dbReference type="SMR" id="Q476G3"/>
<dbReference type="STRING" id="264198.Reut_A0338"/>
<dbReference type="KEGG" id="reu:Reut_A0338"/>
<dbReference type="eggNOG" id="COG0669">
    <property type="taxonomic scope" value="Bacteria"/>
</dbReference>
<dbReference type="HOGENOM" id="CLU_100149_0_1_4"/>
<dbReference type="OrthoDB" id="9806661at2"/>
<dbReference type="UniPathway" id="UPA00241">
    <property type="reaction ID" value="UER00355"/>
</dbReference>
<dbReference type="GO" id="GO:0005737">
    <property type="term" value="C:cytoplasm"/>
    <property type="evidence" value="ECO:0007669"/>
    <property type="project" value="UniProtKB-SubCell"/>
</dbReference>
<dbReference type="GO" id="GO:0005524">
    <property type="term" value="F:ATP binding"/>
    <property type="evidence" value="ECO:0007669"/>
    <property type="project" value="UniProtKB-KW"/>
</dbReference>
<dbReference type="GO" id="GO:0004595">
    <property type="term" value="F:pantetheine-phosphate adenylyltransferase activity"/>
    <property type="evidence" value="ECO:0007669"/>
    <property type="project" value="UniProtKB-UniRule"/>
</dbReference>
<dbReference type="GO" id="GO:0015937">
    <property type="term" value="P:coenzyme A biosynthetic process"/>
    <property type="evidence" value="ECO:0007669"/>
    <property type="project" value="UniProtKB-UniRule"/>
</dbReference>
<dbReference type="CDD" id="cd02163">
    <property type="entry name" value="PPAT"/>
    <property type="match status" value="1"/>
</dbReference>
<dbReference type="Gene3D" id="3.40.50.620">
    <property type="entry name" value="HUPs"/>
    <property type="match status" value="1"/>
</dbReference>
<dbReference type="HAMAP" id="MF_00151">
    <property type="entry name" value="PPAT_bact"/>
    <property type="match status" value="1"/>
</dbReference>
<dbReference type="InterPro" id="IPR004821">
    <property type="entry name" value="Cyt_trans-like"/>
</dbReference>
<dbReference type="InterPro" id="IPR001980">
    <property type="entry name" value="PPAT"/>
</dbReference>
<dbReference type="InterPro" id="IPR014729">
    <property type="entry name" value="Rossmann-like_a/b/a_fold"/>
</dbReference>
<dbReference type="NCBIfam" id="TIGR01510">
    <property type="entry name" value="coaD_prev_kdtB"/>
    <property type="match status" value="1"/>
</dbReference>
<dbReference type="NCBIfam" id="TIGR00125">
    <property type="entry name" value="cyt_tran_rel"/>
    <property type="match status" value="1"/>
</dbReference>
<dbReference type="PANTHER" id="PTHR21342">
    <property type="entry name" value="PHOSPHOPANTETHEINE ADENYLYLTRANSFERASE"/>
    <property type="match status" value="1"/>
</dbReference>
<dbReference type="PANTHER" id="PTHR21342:SF1">
    <property type="entry name" value="PHOSPHOPANTETHEINE ADENYLYLTRANSFERASE"/>
    <property type="match status" value="1"/>
</dbReference>
<dbReference type="Pfam" id="PF01467">
    <property type="entry name" value="CTP_transf_like"/>
    <property type="match status" value="1"/>
</dbReference>
<dbReference type="PRINTS" id="PR01020">
    <property type="entry name" value="LPSBIOSNTHSS"/>
</dbReference>
<dbReference type="SUPFAM" id="SSF52374">
    <property type="entry name" value="Nucleotidylyl transferase"/>
    <property type="match status" value="1"/>
</dbReference>
<organism>
    <name type="scientific">Cupriavidus pinatubonensis (strain JMP 134 / LMG 1197)</name>
    <name type="common">Cupriavidus necator (strain JMP 134)</name>
    <dbReference type="NCBI Taxonomy" id="264198"/>
    <lineage>
        <taxon>Bacteria</taxon>
        <taxon>Pseudomonadati</taxon>
        <taxon>Pseudomonadota</taxon>
        <taxon>Betaproteobacteria</taxon>
        <taxon>Burkholderiales</taxon>
        <taxon>Burkholderiaceae</taxon>
        <taxon>Cupriavidus</taxon>
    </lineage>
</organism>
<protein>
    <recommendedName>
        <fullName evidence="1">Phosphopantetheine adenylyltransferase</fullName>
        <ecNumber evidence="1">2.7.7.3</ecNumber>
    </recommendedName>
    <alternativeName>
        <fullName evidence="1">Dephospho-CoA pyrophosphorylase</fullName>
    </alternativeName>
    <alternativeName>
        <fullName evidence="1">Pantetheine-phosphate adenylyltransferase</fullName>
        <shortName evidence="1">PPAT</shortName>
    </alternativeName>
</protein>
<comment type="function">
    <text evidence="1">Reversibly transfers an adenylyl group from ATP to 4'-phosphopantetheine, yielding dephospho-CoA (dPCoA) and pyrophosphate.</text>
</comment>
<comment type="catalytic activity">
    <reaction evidence="1">
        <text>(R)-4'-phosphopantetheine + ATP + H(+) = 3'-dephospho-CoA + diphosphate</text>
        <dbReference type="Rhea" id="RHEA:19801"/>
        <dbReference type="ChEBI" id="CHEBI:15378"/>
        <dbReference type="ChEBI" id="CHEBI:30616"/>
        <dbReference type="ChEBI" id="CHEBI:33019"/>
        <dbReference type="ChEBI" id="CHEBI:57328"/>
        <dbReference type="ChEBI" id="CHEBI:61723"/>
        <dbReference type="EC" id="2.7.7.3"/>
    </reaction>
</comment>
<comment type="cofactor">
    <cofactor evidence="1">
        <name>Mg(2+)</name>
        <dbReference type="ChEBI" id="CHEBI:18420"/>
    </cofactor>
</comment>
<comment type="pathway">
    <text evidence="1">Cofactor biosynthesis; coenzyme A biosynthesis; CoA from (R)-pantothenate: step 4/5.</text>
</comment>
<comment type="subunit">
    <text evidence="1">Homohexamer.</text>
</comment>
<comment type="subcellular location">
    <subcellularLocation>
        <location evidence="1">Cytoplasm</location>
    </subcellularLocation>
</comment>
<comment type="similarity">
    <text evidence="1">Belongs to the bacterial CoaD family.</text>
</comment>
<accession>Q476G3</accession>
<sequence length="161" mass="18332">MAIAVYPGTFDPMTRGHEDLVRRASNIFDELVVGVAHSPNKRPFFSLEERISIAREVLGHYPNVRVEGFAGLLKDFVRKNNARVIVRGLRAVSDFEYEFQMAGMNRYLLPDVETMFLTPSDQYQFISGTFVREIAVLGGDVSKFVFPSVERWLAEKISKPE</sequence>
<feature type="chain" id="PRO_1000011214" description="Phosphopantetheine adenylyltransferase">
    <location>
        <begin position="1"/>
        <end position="161"/>
    </location>
</feature>
<feature type="binding site" evidence="1">
    <location>
        <begin position="9"/>
        <end position="10"/>
    </location>
    <ligand>
        <name>ATP</name>
        <dbReference type="ChEBI" id="CHEBI:30616"/>
    </ligand>
</feature>
<feature type="binding site" evidence="1">
    <location>
        <position position="9"/>
    </location>
    <ligand>
        <name>substrate</name>
    </ligand>
</feature>
<feature type="binding site" evidence="1">
    <location>
        <position position="17"/>
    </location>
    <ligand>
        <name>ATP</name>
        <dbReference type="ChEBI" id="CHEBI:30616"/>
    </ligand>
</feature>
<feature type="binding site" evidence="1">
    <location>
        <position position="41"/>
    </location>
    <ligand>
        <name>substrate</name>
    </ligand>
</feature>
<feature type="binding site" evidence="1">
    <location>
        <position position="73"/>
    </location>
    <ligand>
        <name>substrate</name>
    </ligand>
</feature>
<feature type="binding site" evidence="1">
    <location>
        <position position="87"/>
    </location>
    <ligand>
        <name>substrate</name>
    </ligand>
</feature>
<feature type="binding site" evidence="1">
    <location>
        <begin position="88"/>
        <end position="90"/>
    </location>
    <ligand>
        <name>ATP</name>
        <dbReference type="ChEBI" id="CHEBI:30616"/>
    </ligand>
</feature>
<feature type="binding site" evidence="1">
    <location>
        <position position="98"/>
    </location>
    <ligand>
        <name>ATP</name>
        <dbReference type="ChEBI" id="CHEBI:30616"/>
    </ligand>
</feature>
<feature type="binding site" evidence="1">
    <location>
        <begin position="123"/>
        <end position="129"/>
    </location>
    <ligand>
        <name>ATP</name>
        <dbReference type="ChEBI" id="CHEBI:30616"/>
    </ligand>
</feature>
<feature type="site" description="Transition state stabilizer" evidence="1">
    <location>
        <position position="17"/>
    </location>
</feature>
<name>COAD_CUPPJ</name>
<proteinExistence type="inferred from homology"/>
<reference key="1">
    <citation type="journal article" date="2010" name="PLoS ONE">
        <title>The complete multipartite genome sequence of Cupriavidus necator JMP134, a versatile pollutant degrader.</title>
        <authorList>
            <person name="Lykidis A."/>
            <person name="Perez-Pantoja D."/>
            <person name="Ledger T."/>
            <person name="Mavromatis K."/>
            <person name="Anderson I.J."/>
            <person name="Ivanova N.N."/>
            <person name="Hooper S.D."/>
            <person name="Lapidus A."/>
            <person name="Lucas S."/>
            <person name="Gonzalez B."/>
            <person name="Kyrpides N.C."/>
        </authorList>
    </citation>
    <scope>NUCLEOTIDE SEQUENCE [LARGE SCALE GENOMIC DNA]</scope>
    <source>
        <strain>JMP134 / LMG 1197</strain>
    </source>
</reference>
<gene>
    <name evidence="1" type="primary">coaD</name>
    <name type="ordered locus">Reut_A0338</name>
</gene>
<keyword id="KW-0067">ATP-binding</keyword>
<keyword id="KW-0173">Coenzyme A biosynthesis</keyword>
<keyword id="KW-0963">Cytoplasm</keyword>
<keyword id="KW-0460">Magnesium</keyword>
<keyword id="KW-0547">Nucleotide-binding</keyword>
<keyword id="KW-0548">Nucleotidyltransferase</keyword>
<keyword id="KW-0808">Transferase</keyword>